<comment type="function">
    <text evidence="2">Acts as a transcriptional regulator. Inhibits myogenesis by sequestrating E proteins, inhibiting trans-activation by MEF2, and inhibiting DNA-binding by MYOD1 through physical interaction. This interaction probably involves the basic domains of both proteins. Also represses expression of pro-inflammatory cytokines such as TNFA and IL1B. Regulates cranial suture patterning and fusion. Activates transcription as a heterodimer with E proteins. Regulates gene expression differentially, depending on dimer composition. Homodimers induce expression of FGFR2 and POSTN while heterodimers repress FGFR2 and POSTN expression and induce THBS1 expression. Heterodimerization is also required for osteoblast differentiation. Represses the activity of the circadian transcriptional activator: NPAS2-BMAL1 heterodimer (By similarity).</text>
</comment>
<comment type="subunit">
    <text evidence="2">Efficient DNA binding requires dimerization with another bHLH protein. Homodimer or heterodimer with E proteins such as TCF3. ID1 binds preferentially to TCF3 but does not interact efficiently with TWIST1 so ID1 levels control the amount of TCF3 available to dimerize with TWIST and thus determine the type of dimer formed (By similarity).</text>
</comment>
<comment type="subcellular location">
    <subcellularLocation>
        <location evidence="3">Nucleus</location>
    </subcellularLocation>
</comment>
<keyword id="KW-0010">Activator</keyword>
<keyword id="KW-0090">Biological rhythms</keyword>
<keyword id="KW-0217">Developmental protein</keyword>
<keyword id="KW-0221">Differentiation</keyword>
<keyword id="KW-0238">DNA-binding</keyword>
<keyword id="KW-0517">Myogenesis</keyword>
<keyword id="KW-0539">Nucleus</keyword>
<keyword id="KW-1185">Reference proteome</keyword>
<keyword id="KW-0678">Repressor</keyword>
<keyword id="KW-0804">Transcription</keyword>
<keyword id="KW-0805">Transcription regulation</keyword>
<protein>
    <recommendedName>
        <fullName>Twist-related protein 1</fullName>
    </recommendedName>
</protein>
<accession>Q8MI03</accession>
<organism>
    <name type="scientific">Pan troglodytes</name>
    <name type="common">Chimpanzee</name>
    <dbReference type="NCBI Taxonomy" id="9598"/>
    <lineage>
        <taxon>Eukaryota</taxon>
        <taxon>Metazoa</taxon>
        <taxon>Chordata</taxon>
        <taxon>Craniata</taxon>
        <taxon>Vertebrata</taxon>
        <taxon>Euteleostomi</taxon>
        <taxon>Mammalia</taxon>
        <taxon>Eutheria</taxon>
        <taxon>Euarchontoglires</taxon>
        <taxon>Primates</taxon>
        <taxon>Haplorrhini</taxon>
        <taxon>Catarrhini</taxon>
        <taxon>Hominidae</taxon>
        <taxon>Pan</taxon>
    </lineage>
</organism>
<name>TWST1_PANTR</name>
<gene>
    <name type="primary">TWIST1</name>
    <name type="synonym">TWIST</name>
</gene>
<proteinExistence type="inferred from homology"/>
<feature type="chain" id="PRO_0000127486" description="Twist-related protein 1">
    <location>
        <begin position="1"/>
        <end position="201"/>
    </location>
</feature>
<feature type="domain" description="bHLH" evidence="3">
    <location>
        <begin position="109"/>
        <end position="160"/>
    </location>
</feature>
<feature type="region of interest" description="Disordered" evidence="4">
    <location>
        <begin position="1"/>
        <end position="106"/>
    </location>
</feature>
<feature type="region of interest" description="Sufficient for transactivation activity" evidence="1">
    <location>
        <begin position="162"/>
        <end position="190"/>
    </location>
</feature>
<feature type="compositionally biased region" description="Low complexity" evidence="4">
    <location>
        <begin position="1"/>
        <end position="18"/>
    </location>
</feature>
<feature type="compositionally biased region" description="Basic residues" evidence="4">
    <location>
        <begin position="34"/>
        <end position="43"/>
    </location>
</feature>
<feature type="compositionally biased region" description="Gly residues" evidence="4">
    <location>
        <begin position="46"/>
        <end position="65"/>
    </location>
</feature>
<feature type="compositionally biased region" description="Gly residues" evidence="4">
    <location>
        <begin position="80"/>
        <end position="100"/>
    </location>
</feature>
<dbReference type="EMBL" id="AJ488168">
    <property type="protein sequence ID" value="CAD32482.1"/>
    <property type="molecule type" value="Genomic_DNA"/>
</dbReference>
<dbReference type="SMR" id="Q8MI03"/>
<dbReference type="PaxDb" id="9598-ENSPTRP00000048124"/>
<dbReference type="eggNOG" id="KOG4447">
    <property type="taxonomic scope" value="Eukaryota"/>
</dbReference>
<dbReference type="InParanoid" id="Q8MI03"/>
<dbReference type="Proteomes" id="UP000002277">
    <property type="component" value="Unplaced"/>
</dbReference>
<dbReference type="GO" id="GO:0005634">
    <property type="term" value="C:nucleus"/>
    <property type="evidence" value="ECO:0007669"/>
    <property type="project" value="UniProtKB-SubCell"/>
</dbReference>
<dbReference type="GO" id="GO:0000981">
    <property type="term" value="F:DNA-binding transcription factor activity, RNA polymerase II-specific"/>
    <property type="evidence" value="ECO:0000318"/>
    <property type="project" value="GO_Central"/>
</dbReference>
<dbReference type="GO" id="GO:0046983">
    <property type="term" value="F:protein dimerization activity"/>
    <property type="evidence" value="ECO:0007669"/>
    <property type="project" value="InterPro"/>
</dbReference>
<dbReference type="GO" id="GO:0000977">
    <property type="term" value="F:RNA polymerase II transcription regulatory region sequence-specific DNA binding"/>
    <property type="evidence" value="ECO:0000318"/>
    <property type="project" value="GO_Central"/>
</dbReference>
<dbReference type="GO" id="GO:0030154">
    <property type="term" value="P:cell differentiation"/>
    <property type="evidence" value="ECO:0007669"/>
    <property type="project" value="UniProtKB-KW"/>
</dbReference>
<dbReference type="GO" id="GO:0032502">
    <property type="term" value="P:developmental process"/>
    <property type="evidence" value="ECO:0000318"/>
    <property type="project" value="GO_Central"/>
</dbReference>
<dbReference type="GO" id="GO:0007517">
    <property type="term" value="P:muscle organ development"/>
    <property type="evidence" value="ECO:0007669"/>
    <property type="project" value="UniProtKB-KW"/>
</dbReference>
<dbReference type="GO" id="GO:0045892">
    <property type="term" value="P:negative regulation of DNA-templated transcription"/>
    <property type="evidence" value="ECO:0000250"/>
    <property type="project" value="UniProtKB"/>
</dbReference>
<dbReference type="GO" id="GO:0006357">
    <property type="term" value="P:regulation of transcription by RNA polymerase II"/>
    <property type="evidence" value="ECO:0000318"/>
    <property type="project" value="GO_Central"/>
</dbReference>
<dbReference type="GO" id="GO:0048511">
    <property type="term" value="P:rhythmic process"/>
    <property type="evidence" value="ECO:0007669"/>
    <property type="project" value="UniProtKB-KW"/>
</dbReference>
<dbReference type="CDD" id="cd11412">
    <property type="entry name" value="bHLH_TS_TWIST1"/>
    <property type="match status" value="1"/>
</dbReference>
<dbReference type="FunFam" id="4.10.280.10:FF:000030">
    <property type="entry name" value="Twist transcription factor"/>
    <property type="match status" value="1"/>
</dbReference>
<dbReference type="Gene3D" id="4.10.280.10">
    <property type="entry name" value="Helix-loop-helix DNA-binding domain"/>
    <property type="match status" value="1"/>
</dbReference>
<dbReference type="InterPro" id="IPR011598">
    <property type="entry name" value="bHLH_dom"/>
</dbReference>
<dbReference type="InterPro" id="IPR050283">
    <property type="entry name" value="E-box_TF_Regulators"/>
</dbReference>
<dbReference type="InterPro" id="IPR036638">
    <property type="entry name" value="HLH_DNA-bd_sf"/>
</dbReference>
<dbReference type="InterPro" id="IPR047093">
    <property type="entry name" value="TWIST1_bHLH"/>
</dbReference>
<dbReference type="PANTHER" id="PTHR23349">
    <property type="entry name" value="BASIC HELIX-LOOP-HELIX TRANSCRIPTION FACTOR, TWIST"/>
    <property type="match status" value="1"/>
</dbReference>
<dbReference type="PANTHER" id="PTHR23349:SF64">
    <property type="entry name" value="TWIST-RELATED PROTEIN 1"/>
    <property type="match status" value="1"/>
</dbReference>
<dbReference type="Pfam" id="PF00010">
    <property type="entry name" value="HLH"/>
    <property type="match status" value="1"/>
</dbReference>
<dbReference type="SMART" id="SM00353">
    <property type="entry name" value="HLH"/>
    <property type="match status" value="1"/>
</dbReference>
<dbReference type="SUPFAM" id="SSF47459">
    <property type="entry name" value="HLH, helix-loop-helix DNA-binding domain"/>
    <property type="match status" value="1"/>
</dbReference>
<dbReference type="PROSITE" id="PS50888">
    <property type="entry name" value="BHLH"/>
    <property type="match status" value="1"/>
</dbReference>
<evidence type="ECO:0000250" key="1"/>
<evidence type="ECO:0000250" key="2">
    <source>
        <dbReference type="UniProtKB" id="P26687"/>
    </source>
</evidence>
<evidence type="ECO:0000255" key="3">
    <source>
        <dbReference type="PROSITE-ProRule" id="PRU00981"/>
    </source>
</evidence>
<evidence type="ECO:0000256" key="4">
    <source>
        <dbReference type="SAM" id="MobiDB-lite"/>
    </source>
</evidence>
<sequence length="201" mass="20762">MMQDVSSSPVSPADDSLSNSEEEPDRQQPPSGKRGGRKRRSSRRSAGGGAGPGGAAGGGVGGGDEPGSPAQGKRGKKSAGCGGGGGGGAGGGGSSSGGGSPQSYEELQTQRVMANVRERQRTQSLNEAFAALPKIIPTLPSDKLSKIQTLKLAARYIDFLYQVLQSDELDSKMASYVAHERLSYAFSVWRMEGAWSMSASH</sequence>
<reference key="1">
    <citation type="journal article" date="2002" name="Dev. Genes Evol.">
        <title>Natural Twist protein variants in a panel of eleven non-human primates: possible implications of Twist gene-tree for primate species tree.</title>
        <authorList>
            <person name="Gachot-Neveu H."/>
            <person name="Stoetzel C."/>
            <person name="Quillet R."/>
            <person name="Dollfus H."/>
            <person name="Perrin-Schmitt F."/>
        </authorList>
    </citation>
    <scope>NUCLEOTIDE SEQUENCE [GENOMIC DNA]</scope>
    <source>
        <tissue>Hair</tissue>
    </source>
</reference>